<feature type="chain" id="PRO_1000148707" description="Protein-export protein SecB">
    <location>
        <begin position="1"/>
        <end position="166"/>
    </location>
</feature>
<sequence>MTDANGAPAEAAPQIRMQVLAQYVRDMSFENMVAQKGLQGGDVQPDIQVQVSLDARKRSVEHQYEVITKFKVTSKNKSGSAETLFLLELDYGGIFHVENVPEDQLHPFLLIECPRLLFPFVRRIISDVTRDGGFPPLNVDTVDFLALYRMELARRAEAQKAAQPVQ</sequence>
<organism>
    <name type="scientific">Cereibacter sphaeroides (strain KD131 / KCTC 12085)</name>
    <name type="common">Rhodobacter sphaeroides</name>
    <dbReference type="NCBI Taxonomy" id="557760"/>
    <lineage>
        <taxon>Bacteria</taxon>
        <taxon>Pseudomonadati</taxon>
        <taxon>Pseudomonadota</taxon>
        <taxon>Alphaproteobacteria</taxon>
        <taxon>Rhodobacterales</taxon>
        <taxon>Paracoccaceae</taxon>
        <taxon>Cereibacter</taxon>
    </lineage>
</organism>
<protein>
    <recommendedName>
        <fullName evidence="1">Protein-export protein SecB</fullName>
    </recommendedName>
</protein>
<dbReference type="EMBL" id="CP001150">
    <property type="protein sequence ID" value="ACM02495.1"/>
    <property type="molecule type" value="Genomic_DNA"/>
</dbReference>
<dbReference type="RefSeq" id="WP_002721743.1">
    <property type="nucleotide sequence ID" value="NC_011963.1"/>
</dbReference>
<dbReference type="SMR" id="B9KPW0"/>
<dbReference type="GeneID" id="67448009"/>
<dbReference type="KEGG" id="rsk:RSKD131_2635"/>
<dbReference type="HOGENOM" id="CLU_111574_0_0_5"/>
<dbReference type="GO" id="GO:0005737">
    <property type="term" value="C:cytoplasm"/>
    <property type="evidence" value="ECO:0007669"/>
    <property type="project" value="UniProtKB-SubCell"/>
</dbReference>
<dbReference type="GO" id="GO:0051082">
    <property type="term" value="F:unfolded protein binding"/>
    <property type="evidence" value="ECO:0007669"/>
    <property type="project" value="InterPro"/>
</dbReference>
<dbReference type="GO" id="GO:0006457">
    <property type="term" value="P:protein folding"/>
    <property type="evidence" value="ECO:0007669"/>
    <property type="project" value="UniProtKB-UniRule"/>
</dbReference>
<dbReference type="GO" id="GO:0051262">
    <property type="term" value="P:protein tetramerization"/>
    <property type="evidence" value="ECO:0007669"/>
    <property type="project" value="InterPro"/>
</dbReference>
<dbReference type="GO" id="GO:0015031">
    <property type="term" value="P:protein transport"/>
    <property type="evidence" value="ECO:0007669"/>
    <property type="project" value="UniProtKB-UniRule"/>
</dbReference>
<dbReference type="Gene3D" id="3.10.420.10">
    <property type="entry name" value="SecB-like"/>
    <property type="match status" value="1"/>
</dbReference>
<dbReference type="HAMAP" id="MF_00821">
    <property type="entry name" value="SecB"/>
    <property type="match status" value="1"/>
</dbReference>
<dbReference type="InterPro" id="IPR003708">
    <property type="entry name" value="SecB"/>
</dbReference>
<dbReference type="InterPro" id="IPR035958">
    <property type="entry name" value="SecB-like_sf"/>
</dbReference>
<dbReference type="NCBIfam" id="NF004392">
    <property type="entry name" value="PRK05751.1-3"/>
    <property type="match status" value="1"/>
</dbReference>
<dbReference type="NCBIfam" id="TIGR00809">
    <property type="entry name" value="secB"/>
    <property type="match status" value="1"/>
</dbReference>
<dbReference type="PANTHER" id="PTHR36918">
    <property type="match status" value="1"/>
</dbReference>
<dbReference type="PANTHER" id="PTHR36918:SF1">
    <property type="entry name" value="PROTEIN-EXPORT PROTEIN SECB"/>
    <property type="match status" value="1"/>
</dbReference>
<dbReference type="Pfam" id="PF02556">
    <property type="entry name" value="SecB"/>
    <property type="match status" value="1"/>
</dbReference>
<dbReference type="PRINTS" id="PR01594">
    <property type="entry name" value="SECBCHAPRONE"/>
</dbReference>
<dbReference type="SUPFAM" id="SSF54611">
    <property type="entry name" value="SecB-like"/>
    <property type="match status" value="1"/>
</dbReference>
<keyword id="KW-0143">Chaperone</keyword>
<keyword id="KW-0963">Cytoplasm</keyword>
<keyword id="KW-0653">Protein transport</keyword>
<keyword id="KW-0811">Translocation</keyword>
<keyword id="KW-0813">Transport</keyword>
<name>SECB_CERSK</name>
<accession>B9KPW0</accession>
<comment type="function">
    <text evidence="1">One of the proteins required for the normal export of preproteins out of the cell cytoplasm. It is a molecular chaperone that binds to a subset of precursor proteins, maintaining them in a translocation-competent state. It also specifically binds to its receptor SecA.</text>
</comment>
<comment type="subunit">
    <text evidence="1">Homotetramer, a dimer of dimers. One homotetramer interacts with 1 SecA dimer.</text>
</comment>
<comment type="subcellular location">
    <subcellularLocation>
        <location evidence="1">Cytoplasm</location>
    </subcellularLocation>
</comment>
<comment type="similarity">
    <text evidence="1">Belongs to the SecB family.</text>
</comment>
<evidence type="ECO:0000255" key="1">
    <source>
        <dbReference type="HAMAP-Rule" id="MF_00821"/>
    </source>
</evidence>
<reference key="1">
    <citation type="journal article" date="2009" name="J. Bacteriol.">
        <title>Complete genome sequence of Rhodobacter sphaeroides KD131.</title>
        <authorList>
            <person name="Lim S.-K."/>
            <person name="Kim S.J."/>
            <person name="Cha S.H."/>
            <person name="Oh Y.-K."/>
            <person name="Rhee H.-J."/>
            <person name="Kim M.-S."/>
            <person name="Lee J.K."/>
        </authorList>
    </citation>
    <scope>NUCLEOTIDE SEQUENCE [LARGE SCALE GENOMIC DNA]</scope>
    <source>
        <strain>KD131 / KCTC 12085</strain>
    </source>
</reference>
<gene>
    <name evidence="1" type="primary">secB</name>
    <name type="ordered locus">RSKD131_2635</name>
</gene>
<proteinExistence type="inferred from homology"/>